<accession>P52465</accession>
<dbReference type="EMBL" id="X83413">
    <property type="protein sequence ID" value="CAA58414.1"/>
    <property type="molecule type" value="Genomic_DNA"/>
</dbReference>
<dbReference type="RefSeq" id="NP_042927.1">
    <property type="nucleotide sequence ID" value="NC_001664.2"/>
</dbReference>
<dbReference type="SMR" id="P52465"/>
<dbReference type="DNASU" id="1487911"/>
<dbReference type="GeneID" id="1487911"/>
<dbReference type="KEGG" id="vg:1487911"/>
<dbReference type="Proteomes" id="UP000009295">
    <property type="component" value="Segment"/>
</dbReference>
<dbReference type="GO" id="GO:0044201">
    <property type="term" value="C:host cell nuclear inner membrane"/>
    <property type="evidence" value="ECO:0007669"/>
    <property type="project" value="UniProtKB-SubCell"/>
</dbReference>
<dbReference type="GO" id="GO:0016020">
    <property type="term" value="C:membrane"/>
    <property type="evidence" value="ECO:0007669"/>
    <property type="project" value="UniProtKB-KW"/>
</dbReference>
<dbReference type="HAMAP" id="MF_04024">
    <property type="entry name" value="HSV_NEC2"/>
    <property type="match status" value="1"/>
</dbReference>
<dbReference type="InterPro" id="IPR007626">
    <property type="entry name" value="Herpesvirus_viron_egress-type"/>
</dbReference>
<dbReference type="Pfam" id="PF04541">
    <property type="entry name" value="Herpes_U34"/>
    <property type="match status" value="1"/>
</dbReference>
<evidence type="ECO:0000255" key="1">
    <source>
        <dbReference type="HAMAP-Rule" id="MF_04024"/>
    </source>
</evidence>
<organismHost>
    <name type="scientific">Homo sapiens</name>
    <name type="common">Human</name>
    <dbReference type="NCBI Taxonomy" id="9606"/>
</organismHost>
<feature type="chain" id="PRO_0000116029" description="Nuclear egress protein 2">
    <location>
        <begin position="1"/>
        <end position="276"/>
    </location>
</feature>
<feature type="topological domain" description="Perinuclear space" evidence="1">
    <location>
        <begin position="1"/>
        <end position="245"/>
    </location>
</feature>
<feature type="transmembrane region" description="Helical" evidence="1">
    <location>
        <begin position="246"/>
        <end position="264"/>
    </location>
</feature>
<feature type="topological domain" description="Nuclear" evidence="1">
    <location>
        <begin position="265"/>
        <end position="276"/>
    </location>
</feature>
<proteinExistence type="inferred from homology"/>
<gene>
    <name evidence="1" type="primary">NEC2</name>
    <name type="ordered locus">U34</name>
    <name type="ordered locus">XILF2</name>
</gene>
<keyword id="KW-1043">Host membrane</keyword>
<keyword id="KW-1048">Host nucleus</keyword>
<keyword id="KW-0426">Late protein</keyword>
<keyword id="KW-0472">Membrane</keyword>
<keyword id="KW-0597">Phosphoprotein</keyword>
<keyword id="KW-1185">Reference proteome</keyword>
<keyword id="KW-0812">Transmembrane</keyword>
<keyword id="KW-1133">Transmembrane helix</keyword>
<comment type="function">
    <text evidence="1">Plays an essential role in virion nuclear egress, the first step of virion release from infected cell. Within the host nucleus, NEC1 interacts with the newly formed capsid through the vertexes and directs it to the inner nuclear membrane by associating with NEC2. Induces the budding of the capsid at the inner nuclear membrane as well as its envelopment into the perinuclear space. There, the NEC1/NEC2 complex promotes the fusion of the enveloped capsid with the outer nuclear membrane and the subsequent release of the viral capsid into the cytoplasm where it will reach the secondary budding sites in the host Golgi or trans-Golgi network.</text>
</comment>
<comment type="subunit">
    <text evidence="1">Forms a heterohexameric complex with NEC1.</text>
</comment>
<comment type="subcellular location">
    <subcellularLocation>
        <location evidence="1">Host nucleus inner membrane</location>
        <topology evidence="1">Single-pass membrane protein</topology>
    </subcellularLocation>
    <text evidence="1">Also localizes at the transient membrane of perinuclear virions.</text>
</comment>
<comment type="PTM">
    <text evidence="1">Phosphorylated.</text>
</comment>
<comment type="similarity">
    <text evidence="1">Belongs to the herpesviridae NEC2 protein family.</text>
</comment>
<reference key="1">
    <citation type="journal article" date="1995" name="Virology">
        <title>The DNA sequence of human herpesvirus-6: structure, coding content, and genome evolution.</title>
        <authorList>
            <person name="Gompels U.A."/>
            <person name="Nicholas J."/>
            <person name="Lawrence G.L."/>
            <person name="Jones M."/>
            <person name="Thomson B.J."/>
            <person name="Martin M.E.D."/>
            <person name="Efstathiou S."/>
            <person name="Craxton M.A."/>
            <person name="Macaulay H.A."/>
        </authorList>
    </citation>
    <scope>NUCLEOTIDE SEQUENCE [LARGE SCALE GENOMIC DNA]</scope>
</reference>
<protein>
    <recommendedName>
        <fullName evidence="1">Nuclear egress protein 2</fullName>
    </recommendedName>
</protein>
<name>NEC2_HHV6U</name>
<sequence length="276" mass="31671">MANVLKEKMYDELLSATCRILKLGSHDYRITERNLLSKNPKFPLCDIILKLDYAYNLEYLLSLWEHVTKQEPRFVFKNTGGAVSMSCYLHAPVKVEGHHAVRECNILRVNECLTVRMSDIVAMKPSTFAVFTKCIIRRNRDDTYVVEFVAFGPENESEYISLLKAIFLKKCSMGKQHLESNRFCQGLRRRSSHVLEKGRFESSGKVVNKASAVVTSQESIKQFYEKEKSLLSGVKFWRLSERHCRFALVGICFLLALYFCYVLLKKTPTPASGSVV</sequence>
<organism>
    <name type="scientific">Human herpesvirus 6A (strain Uganda-1102)</name>
    <name type="common">HHV-6 variant A</name>
    <name type="synonym">Human B lymphotropic virus</name>
    <dbReference type="NCBI Taxonomy" id="10370"/>
    <lineage>
        <taxon>Viruses</taxon>
        <taxon>Duplodnaviria</taxon>
        <taxon>Heunggongvirae</taxon>
        <taxon>Peploviricota</taxon>
        <taxon>Herviviricetes</taxon>
        <taxon>Herpesvirales</taxon>
        <taxon>Orthoherpesviridae</taxon>
        <taxon>Betaherpesvirinae</taxon>
        <taxon>Roseolovirus</taxon>
        <taxon>Roseolovirus humanbeta6a</taxon>
        <taxon>Human betaherpesvirus 6A</taxon>
    </lineage>
</organism>